<gene>
    <name evidence="3" type="primary">CMPK1</name>
    <name type="synonym">CMK</name>
    <name evidence="3" type="synonym">CMPK</name>
    <name type="synonym">UCK</name>
    <name type="synonym">UMK</name>
    <name type="synonym">UMPK</name>
</gene>
<evidence type="ECO:0000250" key="1">
    <source>
        <dbReference type="UniProtKB" id="Q4KM73"/>
    </source>
</evidence>
<evidence type="ECO:0000250" key="2">
    <source>
        <dbReference type="UniProtKB" id="Q9DBP5"/>
    </source>
</evidence>
<evidence type="ECO:0000255" key="3">
    <source>
        <dbReference type="HAMAP-Rule" id="MF_03172"/>
    </source>
</evidence>
<evidence type="ECO:0000269" key="4">
    <source>
    </source>
</evidence>
<evidence type="ECO:0000269" key="5">
    <source>
    </source>
</evidence>
<evidence type="ECO:0000269" key="6">
    <source>
    </source>
</evidence>
<evidence type="ECO:0000269" key="7">
    <source>
    </source>
</evidence>
<evidence type="ECO:0000269" key="8">
    <source>
    </source>
</evidence>
<evidence type="ECO:0000303" key="9">
    <source>
    </source>
</evidence>
<evidence type="ECO:0000305" key="10"/>
<evidence type="ECO:0000305" key="11">
    <source>
    </source>
</evidence>
<evidence type="ECO:0007744" key="12">
    <source>
    </source>
</evidence>
<evidence type="ECO:0007744" key="13">
    <source>
    </source>
</evidence>
<evidence type="ECO:0007744" key="14">
    <source>
    </source>
</evidence>
<evidence type="ECO:0007829" key="15">
    <source>
        <dbReference type="PDB" id="1TEV"/>
    </source>
</evidence>
<proteinExistence type="evidence at protein level"/>
<comment type="function">
    <text evidence="3 4 6 8">Catalyzes the phosphorylation of pyrimidine nucleoside monophosphates at the expense of ATP. Plays an important role in de novo pyrimidine nucleotide biosynthesis. Has preference for UMP and CMP as phosphate acceptors. Also displays broad nucleoside diphosphate kinase activity.</text>
</comment>
<comment type="catalytic activity">
    <reaction evidence="3">
        <text>CMP + ATP = CDP + ADP</text>
        <dbReference type="Rhea" id="RHEA:11600"/>
        <dbReference type="ChEBI" id="CHEBI:30616"/>
        <dbReference type="ChEBI" id="CHEBI:58069"/>
        <dbReference type="ChEBI" id="CHEBI:60377"/>
        <dbReference type="ChEBI" id="CHEBI:456216"/>
        <dbReference type="EC" id="2.7.4.14"/>
    </reaction>
</comment>
<comment type="catalytic activity">
    <reaction evidence="3">
        <text>dCMP + ATP = dCDP + ADP</text>
        <dbReference type="Rhea" id="RHEA:25094"/>
        <dbReference type="ChEBI" id="CHEBI:30616"/>
        <dbReference type="ChEBI" id="CHEBI:57566"/>
        <dbReference type="ChEBI" id="CHEBI:58593"/>
        <dbReference type="ChEBI" id="CHEBI:456216"/>
        <dbReference type="EC" id="2.7.4.14"/>
    </reaction>
</comment>
<comment type="catalytic activity">
    <reaction evidence="3">
        <text>UMP + ATP = UDP + ADP</text>
        <dbReference type="Rhea" id="RHEA:24400"/>
        <dbReference type="ChEBI" id="CHEBI:30616"/>
        <dbReference type="ChEBI" id="CHEBI:57865"/>
        <dbReference type="ChEBI" id="CHEBI:58223"/>
        <dbReference type="ChEBI" id="CHEBI:456216"/>
        <dbReference type="EC" id="2.7.4.14"/>
    </reaction>
</comment>
<comment type="catalytic activity">
    <reaction evidence="3">
        <text>a 2'-deoxyribonucleoside 5'-diphosphate + ATP = a 2'-deoxyribonucleoside 5'-triphosphate + ADP</text>
        <dbReference type="Rhea" id="RHEA:44640"/>
        <dbReference type="ChEBI" id="CHEBI:30616"/>
        <dbReference type="ChEBI" id="CHEBI:61560"/>
        <dbReference type="ChEBI" id="CHEBI:73316"/>
        <dbReference type="ChEBI" id="CHEBI:456216"/>
        <dbReference type="EC" id="2.7.4.6"/>
    </reaction>
</comment>
<comment type="catalytic activity">
    <reaction evidence="3">
        <text>a ribonucleoside 5'-diphosphate + ATP = a ribonucleoside 5'-triphosphate + ADP</text>
        <dbReference type="Rhea" id="RHEA:18113"/>
        <dbReference type="ChEBI" id="CHEBI:30616"/>
        <dbReference type="ChEBI" id="CHEBI:57930"/>
        <dbReference type="ChEBI" id="CHEBI:61557"/>
        <dbReference type="ChEBI" id="CHEBI:456216"/>
        <dbReference type="EC" id="2.7.4.6"/>
    </reaction>
</comment>
<comment type="cofactor">
    <cofactor>
        <name>Mg(2+)</name>
        <dbReference type="ChEBI" id="CHEBI:18420"/>
    </cofactor>
    <text>Binds 1 Mg(2+) ion per monomer.</text>
</comment>
<comment type="subunit">
    <text evidence="3">Monomer.</text>
</comment>
<comment type="interaction">
    <interactant intactId="EBI-1053384">
        <id>P30085</id>
    </interactant>
    <interactant intactId="EBI-948354">
        <id>Q6DKK2</id>
        <label>TTC19</label>
    </interactant>
    <organismsDiffer>false</organismsDiffer>
    <experiments>2</experiments>
</comment>
<comment type="interaction">
    <interactant intactId="EBI-23373346">
        <id>P30085-3</id>
    </interactant>
    <interactant intactId="EBI-1542113">
        <id>P07384</id>
        <label>CAPN1</label>
    </interactant>
    <organismsDiffer>false</organismsDiffer>
    <experiments>3</experiments>
</comment>
<comment type="interaction">
    <interactant intactId="EBI-23373346">
        <id>P30085-3</id>
    </interactant>
    <interactant intactId="EBI-7062247">
        <id>Q9UHD4</id>
        <label>CIDEB</label>
    </interactant>
    <organismsDiffer>false</organismsDiffer>
    <experiments>3</experiments>
</comment>
<comment type="interaction">
    <interactant intactId="EBI-23373346">
        <id>P30085-3</id>
    </interactant>
    <interactant intactId="EBI-744081">
        <id>Q96EQ0</id>
        <label>SGTB</label>
    </interactant>
    <organismsDiffer>false</organismsDiffer>
    <experiments>3</experiments>
</comment>
<comment type="subcellular location">
    <subcellularLocation>
        <location evidence="3 4 6">Nucleus</location>
    </subcellularLocation>
    <subcellularLocation>
        <location evidence="3 4 6">Cytoplasm</location>
    </subcellularLocation>
    <text evidence="6">Predominantly cytoplasmic, less than 15% nuclear.</text>
</comment>
<comment type="alternative products">
    <event type="alternative splicing"/>
    <event type="alternative initiation"/>
    <isoform>
        <id>P30085-1</id>
        <name>1</name>
        <sequence type="displayed"/>
    </isoform>
    <isoform>
        <id>P30085-2</id>
        <name>2</name>
        <sequence type="described" ref="VSP_046683"/>
    </isoform>
    <isoform>
        <id>P30085-3</id>
        <name>3</name>
        <sequence type="described" ref="VSP_060085"/>
    </isoform>
</comment>
<comment type="tissue specificity">
    <text evidence="5">Ubiquitously expressed.</text>
</comment>
<comment type="domain">
    <text evidence="3 11">Consists of three domains, a large central CORE domain and two small peripheral domains, NMPbind and LID, which undergo movements during catalysis. The LID domain closes over the site of phosphoryl transfer upon ATP binding. Assembling and dissambling the active center during each catalytic cycle provides an effective means to prevent ATP hydrolysis.</text>
</comment>
<comment type="miscellaneous">
    <molecule>Isoform 3</molecule>
    <text evidence="10">May be produced from an in-frame upstream initiation codon. However, experimental evidence indicates that use of the downstream initiation codon is more likely (isoform 1 sequence).</text>
</comment>
<comment type="similarity">
    <text evidence="3">Belongs to the adenylate kinase family. UMP-CMP kinase subfamily.</text>
</comment>
<comment type="sequence caution" evidence="10">
    <conflict type="erroneous initiation">
        <sequence resource="EMBL-CDS" id="BAG60709"/>
    </conflict>
    <text>Extended N-terminus.</text>
</comment>
<sequence length="196" mass="22222">MKPLVVFVLGGPGAGKGTQCARIVEKYGYTHLSAGELLRDERKNPDSQYGELIEKYIKEGKIVPVEITISLLKREMDQTMAANAQKNKFLIDGFPRNQDNLQGWNKTMDGKADVSFVLFFDCNNEICIERCLERGKSSGRSDDNRESLEKRIQTYLQSTKPIIDLYEEMGKVKKIDASKSVDEVFDEVVQIFDKEG</sequence>
<feature type="chain" id="PRO_0000158949" description="UMP-CMP kinase">
    <location>
        <begin position="1"/>
        <end position="196"/>
    </location>
</feature>
<feature type="region of interest" description="NMP" evidence="7">
    <location>
        <begin position="33"/>
        <end position="63"/>
    </location>
</feature>
<feature type="region of interest" description="LID" evidence="7">
    <location>
        <begin position="133"/>
        <end position="143"/>
    </location>
</feature>
<feature type="binding site" evidence="3">
    <location>
        <begin position="13"/>
        <end position="18"/>
    </location>
    <ligand>
        <name>ATP</name>
        <dbReference type="ChEBI" id="CHEBI:30616"/>
    </ligand>
</feature>
<feature type="binding site" evidence="3">
    <location>
        <position position="39"/>
    </location>
    <ligand>
        <name>a ribonucleoside 5'-phosphate</name>
        <dbReference type="ChEBI" id="CHEBI:58043"/>
    </ligand>
</feature>
<feature type="binding site" evidence="3">
    <location>
        <begin position="61"/>
        <end position="63"/>
    </location>
    <ligand>
        <name>a ribonucleoside 5'-phosphate</name>
        <dbReference type="ChEBI" id="CHEBI:58043"/>
    </ligand>
</feature>
<feature type="binding site" evidence="3">
    <location>
        <begin position="93"/>
        <end position="96"/>
    </location>
    <ligand>
        <name>a ribonucleoside 5'-phosphate</name>
        <dbReference type="ChEBI" id="CHEBI:58043"/>
    </ligand>
</feature>
<feature type="binding site" evidence="3">
    <location>
        <position position="100"/>
    </location>
    <ligand>
        <name>CMP</name>
        <dbReference type="ChEBI" id="CHEBI:60377"/>
    </ligand>
</feature>
<feature type="binding site" evidence="3">
    <location>
        <position position="134"/>
    </location>
    <ligand>
        <name>ATP</name>
        <dbReference type="ChEBI" id="CHEBI:30616"/>
    </ligand>
</feature>
<feature type="binding site" evidence="3">
    <location>
        <position position="140"/>
    </location>
    <ligand>
        <name>a ribonucleoside 5'-phosphate</name>
        <dbReference type="ChEBI" id="CHEBI:58043"/>
    </ligand>
</feature>
<feature type="binding site" evidence="3">
    <location>
        <position position="151"/>
    </location>
    <ligand>
        <name>a ribonucleoside 5'-phosphate</name>
        <dbReference type="ChEBI" id="CHEBI:58043"/>
    </ligand>
</feature>
<feature type="binding site" evidence="3">
    <location>
        <position position="179"/>
    </location>
    <ligand>
        <name>ATP</name>
        <dbReference type="ChEBI" id="CHEBI:30616"/>
    </ligand>
</feature>
<feature type="modified residue" description="Phosphoserine" evidence="13">
    <location>
        <position position="33"/>
    </location>
</feature>
<feature type="modified residue" description="N6-acetyllysine" evidence="2">
    <location>
        <position position="43"/>
    </location>
</feature>
<feature type="modified residue" description="N6-acetyllysine" evidence="12">
    <location>
        <position position="55"/>
    </location>
</feature>
<feature type="modified residue" description="N6-succinyllysine" evidence="2">
    <location>
        <position position="106"/>
    </location>
</feature>
<feature type="modified residue" description="Phosphoserine" evidence="1">
    <location>
        <position position="180"/>
    </location>
</feature>
<feature type="cross-link" description="Glycyl lysine isopeptide (Lys-Gly) (interchain with G-Cter in SUMO2)" evidence="14">
    <location>
        <position position="73"/>
    </location>
</feature>
<feature type="splice variant" id="VSP_060085" description="In isoform 3.">
    <original>M</original>
    <variation>MLSRCRSGLLHVLGLSFLLQTRRPILLCSPRLM</variation>
    <location>
        <position position="1"/>
    </location>
</feature>
<feature type="splice variant" id="VSP_046683" description="In isoform 2." evidence="9">
    <location>
        <begin position="26"/>
        <end position="74"/>
    </location>
</feature>
<feature type="sequence conflict" description="In Ref. 12; AA sequence." evidence="10" ref="12">
    <original>Y</original>
    <variation>I</variation>
    <location>
        <position position="27"/>
    </location>
</feature>
<feature type="strand" evidence="15">
    <location>
        <begin position="4"/>
        <end position="9"/>
    </location>
</feature>
<feature type="helix" evidence="15">
    <location>
        <begin position="16"/>
        <end position="27"/>
    </location>
</feature>
<feature type="strand" evidence="15">
    <location>
        <begin position="30"/>
        <end position="33"/>
    </location>
</feature>
<feature type="helix" evidence="15">
    <location>
        <begin position="34"/>
        <end position="43"/>
    </location>
</feature>
<feature type="helix" evidence="15">
    <location>
        <begin position="50"/>
        <end position="58"/>
    </location>
</feature>
<feature type="helix" evidence="15">
    <location>
        <begin position="65"/>
        <end position="82"/>
    </location>
</feature>
<feature type="strand" evidence="15">
    <location>
        <begin position="88"/>
        <end position="93"/>
    </location>
</feature>
<feature type="helix" evidence="15">
    <location>
        <begin position="98"/>
        <end position="108"/>
    </location>
</feature>
<feature type="turn" evidence="15">
    <location>
        <begin position="109"/>
        <end position="111"/>
    </location>
</feature>
<feature type="strand" evidence="15">
    <location>
        <begin position="113"/>
        <end position="121"/>
    </location>
</feature>
<feature type="helix" evidence="15">
    <location>
        <begin position="124"/>
        <end position="136"/>
    </location>
</feature>
<feature type="helix" evidence="15">
    <location>
        <begin position="145"/>
        <end position="168"/>
    </location>
</feature>
<feature type="strand" evidence="15">
    <location>
        <begin position="172"/>
        <end position="176"/>
    </location>
</feature>
<feature type="helix" evidence="15">
    <location>
        <begin position="181"/>
        <end position="194"/>
    </location>
</feature>
<dbReference type="EC" id="2.7.4.14" evidence="3"/>
<dbReference type="EC" id="2.7.4.6" evidence="3"/>
<dbReference type="EMBL" id="AF070416">
    <property type="protein sequence ID" value="AAF17709.1"/>
    <property type="molecule type" value="mRNA"/>
</dbReference>
<dbReference type="EMBL" id="AF259961">
    <property type="protein sequence ID" value="AAG22609.1"/>
    <property type="molecule type" value="mRNA"/>
</dbReference>
<dbReference type="EMBL" id="AF110643">
    <property type="protein sequence ID" value="AAD48583.1"/>
    <property type="molecule type" value="mRNA"/>
</dbReference>
<dbReference type="EMBL" id="AF087865">
    <property type="protein sequence ID" value="AAP97174.1"/>
    <property type="molecule type" value="mRNA"/>
</dbReference>
<dbReference type="EMBL" id="AF112216">
    <property type="protein sequence ID" value="AAF17204.1"/>
    <property type="molecule type" value="mRNA"/>
</dbReference>
<dbReference type="EMBL" id="AK223014">
    <property type="protein sequence ID" value="BAD96734.1"/>
    <property type="molecule type" value="mRNA"/>
</dbReference>
<dbReference type="EMBL" id="AK298502">
    <property type="protein sequence ID" value="BAG60709.1"/>
    <property type="status" value="ALT_INIT"/>
    <property type="molecule type" value="mRNA"/>
</dbReference>
<dbReference type="EMBL" id="AK312693">
    <property type="protein sequence ID" value="BAG35572.1"/>
    <property type="molecule type" value="mRNA"/>
</dbReference>
<dbReference type="EMBL" id="AL513322">
    <property type="status" value="NOT_ANNOTATED_CDS"/>
    <property type="molecule type" value="Genomic_DNA"/>
</dbReference>
<dbReference type="EMBL" id="AL607122">
    <property type="status" value="NOT_ANNOTATED_CDS"/>
    <property type="molecule type" value="Genomic_DNA"/>
</dbReference>
<dbReference type="EMBL" id="CH471059">
    <property type="protein sequence ID" value="EAX06869.1"/>
    <property type="molecule type" value="Genomic_DNA"/>
</dbReference>
<dbReference type="EMBL" id="CH471059">
    <property type="protein sequence ID" value="EAX06871.1"/>
    <property type="molecule type" value="Genomic_DNA"/>
</dbReference>
<dbReference type="EMBL" id="BC014961">
    <property type="protein sequence ID" value="AAH14961.1"/>
    <property type="molecule type" value="mRNA"/>
</dbReference>
<dbReference type="CCDS" id="CCDS549.1">
    <molecule id="P30085-3"/>
</dbReference>
<dbReference type="CCDS" id="CCDS90947.1">
    <molecule id="P30085-1"/>
</dbReference>
<dbReference type="PIR" id="B45482">
    <property type="entry name" value="B45482"/>
</dbReference>
<dbReference type="RefSeq" id="NP_001129612.1">
    <property type="nucleotide sequence ID" value="NM_001136140.1"/>
</dbReference>
<dbReference type="RefSeq" id="NP_001353064.1">
    <molecule id="P30085-1"/>
    <property type="nucleotide sequence ID" value="NM_001366135.1"/>
</dbReference>
<dbReference type="RefSeq" id="NP_057392.1">
    <molecule id="P30085-3"/>
    <property type="nucleotide sequence ID" value="NM_016308.3"/>
</dbReference>
<dbReference type="PDB" id="1TEV">
    <property type="method" value="X-ray"/>
    <property type="resolution" value="2.10 A"/>
    <property type="chains" value="A=1-196"/>
</dbReference>
<dbReference type="PDB" id="7E9V">
    <property type="method" value="X-ray"/>
    <property type="resolution" value="2.10 A"/>
    <property type="chains" value="A=1-196"/>
</dbReference>
<dbReference type="PDBsum" id="1TEV"/>
<dbReference type="PDBsum" id="7E9V"/>
<dbReference type="SMR" id="P30085"/>
<dbReference type="BioGRID" id="119700">
    <property type="interactions" value="112"/>
</dbReference>
<dbReference type="FunCoup" id="P30085">
    <property type="interactions" value="3073"/>
</dbReference>
<dbReference type="IntAct" id="P30085">
    <property type="interactions" value="22"/>
</dbReference>
<dbReference type="MINT" id="P30085"/>
<dbReference type="STRING" id="9606.ENSP00000360939"/>
<dbReference type="BindingDB" id="P30085"/>
<dbReference type="ChEMBL" id="CHEMBL5681"/>
<dbReference type="DrugBank" id="DB03403">
    <property type="generic name" value="Cytidine-5'-Monophosphate"/>
</dbReference>
<dbReference type="DrugBank" id="DB01262">
    <property type="generic name" value="Decitabine"/>
</dbReference>
<dbReference type="DrugBank" id="DB00441">
    <property type="generic name" value="Gemcitabine"/>
</dbReference>
<dbReference type="DrugBank" id="DB00709">
    <property type="generic name" value="Lamivudine"/>
</dbReference>
<dbReference type="DrugBank" id="DB08934">
    <property type="generic name" value="Sofosbuvir"/>
</dbReference>
<dbReference type="DrugBank" id="DB04444">
    <property type="generic name" value="Tetrafluoroaluminate Ion"/>
</dbReference>
<dbReference type="DrugBank" id="DB03435">
    <property type="generic name" value="Uridine-5'-Diphosphate"/>
</dbReference>
<dbReference type="DrugCentral" id="P30085"/>
<dbReference type="GlyGen" id="P30085">
    <property type="glycosylation" value="2 sites, 1 O-linked glycan (2 sites)"/>
</dbReference>
<dbReference type="iPTMnet" id="P30085"/>
<dbReference type="MetOSite" id="P30085"/>
<dbReference type="PhosphoSitePlus" id="P30085"/>
<dbReference type="SwissPalm" id="P30085"/>
<dbReference type="BioMuta" id="CMPK1"/>
<dbReference type="DMDM" id="12644008"/>
<dbReference type="OGP" id="P30085"/>
<dbReference type="jPOST" id="P30085"/>
<dbReference type="MassIVE" id="P30085"/>
<dbReference type="PaxDb" id="9606-ENSP00000360939"/>
<dbReference type="PeptideAtlas" id="P30085"/>
<dbReference type="ProteomicsDB" id="20330"/>
<dbReference type="ProteomicsDB" id="54633">
    <molecule id="P30085-1"/>
</dbReference>
<dbReference type="Pumba" id="P30085"/>
<dbReference type="TopDownProteomics" id="P30085-1">
    <molecule id="P30085-1"/>
</dbReference>
<dbReference type="Antibodypedia" id="32884">
    <property type="antibodies" value="514 antibodies from 33 providers"/>
</dbReference>
<dbReference type="DNASU" id="51727"/>
<dbReference type="Ensembl" id="ENST00000371873.10">
    <molecule id="P30085-3"/>
    <property type="protein sequence ID" value="ENSP00000360939.5"/>
    <property type="gene ID" value="ENSG00000162368.15"/>
</dbReference>
<dbReference type="Ensembl" id="ENST00000699075.1">
    <molecule id="P30085-1"/>
    <property type="protein sequence ID" value="ENSP00000514114.1"/>
    <property type="gene ID" value="ENSG00000162368.15"/>
</dbReference>
<dbReference type="GeneID" id="51727"/>
<dbReference type="KEGG" id="hsa:51727"/>
<dbReference type="MANE-Select" id="ENST00000371873.10">
    <molecule id="P30085-3"/>
    <property type="protein sequence ID" value="ENSP00000360939.5"/>
    <property type="RefSeq nucleotide sequence ID" value="NM_016308.3"/>
    <property type="RefSeq protein sequence ID" value="NP_057392.1"/>
</dbReference>
<dbReference type="UCSC" id="uc001cri.3">
    <molecule id="P30085-1"/>
    <property type="organism name" value="human"/>
</dbReference>
<dbReference type="AGR" id="HGNC:18170"/>
<dbReference type="CTD" id="51727"/>
<dbReference type="DisGeNET" id="51727"/>
<dbReference type="GeneCards" id="CMPK1"/>
<dbReference type="HGNC" id="HGNC:18170">
    <property type="gene designation" value="CMPK1"/>
</dbReference>
<dbReference type="HPA" id="ENSG00000162368">
    <property type="expression patterns" value="Low tissue specificity"/>
</dbReference>
<dbReference type="MIM" id="191710">
    <property type="type" value="gene"/>
</dbReference>
<dbReference type="neXtProt" id="NX_P30085"/>
<dbReference type="OpenTargets" id="ENSG00000162368"/>
<dbReference type="PharmGKB" id="PA162382539"/>
<dbReference type="VEuPathDB" id="HostDB:ENSG00000162368"/>
<dbReference type="eggNOG" id="KOG3079">
    <property type="taxonomic scope" value="Eukaryota"/>
</dbReference>
<dbReference type="GeneTree" id="ENSGT00940000160589"/>
<dbReference type="HOGENOM" id="CLU_032354_0_2_1"/>
<dbReference type="InParanoid" id="P30085"/>
<dbReference type="OMA" id="EQTMPVI"/>
<dbReference type="OrthoDB" id="442176at2759"/>
<dbReference type="PAN-GO" id="P30085">
    <property type="GO annotations" value="6 GO annotations based on evolutionary models"/>
</dbReference>
<dbReference type="PhylomeDB" id="P30085"/>
<dbReference type="TreeFam" id="TF354283"/>
<dbReference type="BioCyc" id="MetaCyc:HS08663-MONOMER"/>
<dbReference type="BRENDA" id="2.7.4.14">
    <property type="organism ID" value="2681"/>
</dbReference>
<dbReference type="PathwayCommons" id="P30085"/>
<dbReference type="Reactome" id="R-HSA-499943">
    <property type="pathway name" value="Interconversion of nucleotide di- and triphosphates"/>
</dbReference>
<dbReference type="SABIO-RK" id="P30085"/>
<dbReference type="SignaLink" id="P30085"/>
<dbReference type="BioGRID-ORCS" id="51727">
    <property type="hits" value="675 hits in 1148 CRISPR screens"/>
</dbReference>
<dbReference type="CD-CODE" id="FB4E32DD">
    <property type="entry name" value="Presynaptic clusters and postsynaptic densities"/>
</dbReference>
<dbReference type="ChiTaRS" id="CMPK1">
    <property type="organism name" value="human"/>
</dbReference>
<dbReference type="EvolutionaryTrace" id="P30085"/>
<dbReference type="GeneWiki" id="CMPK"/>
<dbReference type="GenomeRNAi" id="51727"/>
<dbReference type="Pharos" id="P30085">
    <property type="development level" value="Tchem"/>
</dbReference>
<dbReference type="PRO" id="PR:P30085"/>
<dbReference type="Proteomes" id="UP000005640">
    <property type="component" value="Chromosome 1"/>
</dbReference>
<dbReference type="RNAct" id="P30085">
    <property type="molecule type" value="protein"/>
</dbReference>
<dbReference type="Bgee" id="ENSG00000162368">
    <property type="expression patterns" value="Expressed in jejunal mucosa and 207 other cell types or tissues"/>
</dbReference>
<dbReference type="ExpressionAtlas" id="P30085">
    <property type="expression patterns" value="baseline and differential"/>
</dbReference>
<dbReference type="GO" id="GO:0005737">
    <property type="term" value="C:cytoplasm"/>
    <property type="evidence" value="ECO:0000318"/>
    <property type="project" value="GO_Central"/>
</dbReference>
<dbReference type="GO" id="GO:0005829">
    <property type="term" value="C:cytosol"/>
    <property type="evidence" value="ECO:0000304"/>
    <property type="project" value="Reactome"/>
</dbReference>
<dbReference type="GO" id="GO:0070062">
    <property type="term" value="C:extracellular exosome"/>
    <property type="evidence" value="ECO:0007005"/>
    <property type="project" value="UniProtKB"/>
</dbReference>
<dbReference type="GO" id="GO:0005730">
    <property type="term" value="C:nucleolus"/>
    <property type="evidence" value="ECO:0000314"/>
    <property type="project" value="HPA"/>
</dbReference>
<dbReference type="GO" id="GO:0005654">
    <property type="term" value="C:nucleoplasm"/>
    <property type="evidence" value="ECO:0000314"/>
    <property type="project" value="HPA"/>
</dbReference>
<dbReference type="GO" id="GO:0005634">
    <property type="term" value="C:nucleus"/>
    <property type="evidence" value="ECO:0000318"/>
    <property type="project" value="GO_Central"/>
</dbReference>
<dbReference type="GO" id="GO:0004127">
    <property type="term" value="F:(d)CMP kinase activity"/>
    <property type="evidence" value="ECO:0000318"/>
    <property type="project" value="GO_Central"/>
</dbReference>
<dbReference type="GO" id="GO:0005524">
    <property type="term" value="F:ATP binding"/>
    <property type="evidence" value="ECO:0007669"/>
    <property type="project" value="UniProtKB-KW"/>
</dbReference>
<dbReference type="GO" id="GO:0036430">
    <property type="term" value="F:CMP kinase activity"/>
    <property type="evidence" value="ECO:0007669"/>
    <property type="project" value="RHEA"/>
</dbReference>
<dbReference type="GO" id="GO:0036431">
    <property type="term" value="F:dCMP kinase activity"/>
    <property type="evidence" value="ECO:0007669"/>
    <property type="project" value="RHEA"/>
</dbReference>
<dbReference type="GO" id="GO:0004550">
    <property type="term" value="F:nucleoside diphosphate kinase activity"/>
    <property type="evidence" value="ECO:0000314"/>
    <property type="project" value="UniProtKB"/>
</dbReference>
<dbReference type="GO" id="GO:0050145">
    <property type="term" value="F:nucleoside monophosphate kinase activity"/>
    <property type="evidence" value="ECO:0000269"/>
    <property type="project" value="Reactome"/>
</dbReference>
<dbReference type="GO" id="GO:0033862">
    <property type="term" value="F:UMP kinase activity"/>
    <property type="evidence" value="ECO:0000314"/>
    <property type="project" value="MGI"/>
</dbReference>
<dbReference type="GO" id="GO:0004849">
    <property type="term" value="F:uridine kinase activity"/>
    <property type="evidence" value="ECO:0000304"/>
    <property type="project" value="ProtInc"/>
</dbReference>
<dbReference type="GO" id="GO:0006207">
    <property type="term" value="P:'de novo' pyrimidine nucleobase biosynthetic process"/>
    <property type="evidence" value="ECO:0007669"/>
    <property type="project" value="InterPro"/>
</dbReference>
<dbReference type="GO" id="GO:0046705">
    <property type="term" value="P:CDP biosynthetic process"/>
    <property type="evidence" value="ECO:0000318"/>
    <property type="project" value="GO_Central"/>
</dbReference>
<dbReference type="GO" id="GO:0015949">
    <property type="term" value="P:nucleobase-containing small molecule interconversion"/>
    <property type="evidence" value="ECO:0000304"/>
    <property type="project" value="Reactome"/>
</dbReference>
<dbReference type="GO" id="GO:0009220">
    <property type="term" value="P:pyrimidine ribonucleotide biosynthetic process"/>
    <property type="evidence" value="ECO:0000304"/>
    <property type="project" value="ProtInc"/>
</dbReference>
<dbReference type="GO" id="GO:0006225">
    <property type="term" value="P:UDP biosynthetic process"/>
    <property type="evidence" value="ECO:0000314"/>
    <property type="project" value="MGI"/>
</dbReference>
<dbReference type="CDD" id="cd01428">
    <property type="entry name" value="ADK"/>
    <property type="match status" value="1"/>
</dbReference>
<dbReference type="FunFam" id="3.40.50.300:FF:000315">
    <property type="entry name" value="Adenylate kinase 1"/>
    <property type="match status" value="1"/>
</dbReference>
<dbReference type="Gene3D" id="3.40.50.300">
    <property type="entry name" value="P-loop containing nucleotide triphosphate hydrolases"/>
    <property type="match status" value="1"/>
</dbReference>
<dbReference type="HAMAP" id="MF_00235">
    <property type="entry name" value="Adenylate_kinase_Adk"/>
    <property type="match status" value="1"/>
</dbReference>
<dbReference type="HAMAP" id="MF_03172">
    <property type="entry name" value="Adenylate_kinase_UMP_CMP_kin"/>
    <property type="match status" value="1"/>
</dbReference>
<dbReference type="InterPro" id="IPR000850">
    <property type="entry name" value="Adenylat/UMP-CMP_kin"/>
</dbReference>
<dbReference type="InterPro" id="IPR033690">
    <property type="entry name" value="Adenylat_kinase_CS"/>
</dbReference>
<dbReference type="InterPro" id="IPR027417">
    <property type="entry name" value="P-loop_NTPase"/>
</dbReference>
<dbReference type="InterPro" id="IPR006266">
    <property type="entry name" value="UMP_CMP_kinase"/>
</dbReference>
<dbReference type="NCBIfam" id="TIGR01359">
    <property type="entry name" value="UMP_CMP_kin_fam"/>
    <property type="match status" value="1"/>
</dbReference>
<dbReference type="PANTHER" id="PTHR23359">
    <property type="entry name" value="NUCLEOTIDE KINASE"/>
    <property type="match status" value="1"/>
</dbReference>
<dbReference type="Pfam" id="PF00406">
    <property type="entry name" value="ADK"/>
    <property type="match status" value="1"/>
</dbReference>
<dbReference type="PRINTS" id="PR00094">
    <property type="entry name" value="ADENYLTKNASE"/>
</dbReference>
<dbReference type="SUPFAM" id="SSF52540">
    <property type="entry name" value="P-loop containing nucleoside triphosphate hydrolases"/>
    <property type="match status" value="1"/>
</dbReference>
<dbReference type="PROSITE" id="PS00113">
    <property type="entry name" value="ADENYLATE_KINASE"/>
    <property type="match status" value="1"/>
</dbReference>
<name>KCY_HUMAN</name>
<accession>P30085</accession>
<accession>B2R6S5</accession>
<accession>B4DPU7</accession>
<accession>E9PGI8</accession>
<accession>Q53GB7</accession>
<accession>Q5SVZ0</accession>
<accession>Q96C07</accession>
<accession>Q9UBQ8</accession>
<accession>Q9UIA2</accession>
<keyword id="KW-0002">3D-structure</keyword>
<keyword id="KW-0007">Acetylation</keyword>
<keyword id="KW-0024">Alternative initiation</keyword>
<keyword id="KW-0025">Alternative splicing</keyword>
<keyword id="KW-0067">ATP-binding</keyword>
<keyword id="KW-0963">Cytoplasm</keyword>
<keyword id="KW-0903">Direct protein sequencing</keyword>
<keyword id="KW-1017">Isopeptide bond</keyword>
<keyword id="KW-0418">Kinase</keyword>
<keyword id="KW-0547">Nucleotide-binding</keyword>
<keyword id="KW-0539">Nucleus</keyword>
<keyword id="KW-0597">Phosphoprotein</keyword>
<keyword id="KW-1267">Proteomics identification</keyword>
<keyword id="KW-0665">Pyrimidine biosynthesis</keyword>
<keyword id="KW-1185">Reference proteome</keyword>
<keyword id="KW-0808">Transferase</keyword>
<keyword id="KW-0832">Ubl conjugation</keyword>
<reference key="1">
    <citation type="journal article" date="1999" name="Mol. Pharmacol.">
        <title>Phosphorylation of deoxycytidine analog monophosphates by UMP-CMP kinase: molecular characterization of the human enzyme.</title>
        <authorList>
            <person name="Van Rompay A.R."/>
            <person name="Johansson M."/>
            <person name="Karlsson A."/>
        </authorList>
    </citation>
    <scope>NUCLEOTIDE SEQUENCE [MRNA] (ISOFORM 3)</scope>
    <scope>CATALYTIC ACTIVITY</scope>
    <scope>SUBCELLULAR LOCATION</scope>
    <scope>FUNCTION</scope>
</reference>
<reference key="2">
    <citation type="journal article" date="2001" name="Life Sci.">
        <title>Characterization of human UMP-CMP kinase enzymatic activity and 5' untranslated region.</title>
        <authorList>
            <person name="Pearman A.T."/>
            <person name="Castro-Faria-Neto H.C."/>
            <person name="McIntyre T.M."/>
            <person name="Prescott S.M."/>
            <person name="Stafforini D.M."/>
        </authorList>
    </citation>
    <scope>NUCLEOTIDE SEQUENCE [MRNA] (ISOFORM 1)</scope>
    <scope>TISSUE SPECIFICITY</scope>
    <scope>CHROMOSOMAL LOCATION</scope>
    <scope>IDENTIFICATION OF START CODON</scope>
    <source>
        <tissue>Macrophage</tissue>
    </source>
</reference>
<reference key="3">
    <citation type="journal article" date="2002" name="Cancer Res.">
        <title>Characterization of human UMP/CMP kinase and its phosphorylation of D- and L-form deoxycytidine analogue monophosphates.</title>
        <authorList>
            <person name="Liou J.-Y."/>
            <person name="Dutschman G.E."/>
            <person name="Lam W."/>
            <person name="Jiang Z."/>
            <person name="Cheng Y.-C."/>
        </authorList>
    </citation>
    <scope>NUCLEOTIDE SEQUENCE [MRNA] (ISOFORM 1)</scope>
    <scope>FUNCTION</scope>
    <scope>SUBCELLULAR LOCATION</scope>
</reference>
<reference key="4">
    <citation type="submission" date="1998-12" db="EMBL/GenBank/DDBJ databases">
        <title>Human UMP-CMP kinase gene.</title>
        <authorList>
            <person name="Song H."/>
            <person name="Peng Y."/>
            <person name="Dai M."/>
            <person name="Huang Q."/>
            <person name="Mao Y."/>
            <person name="Zhang Q."/>
            <person name="Mao M."/>
            <person name="Fu G."/>
            <person name="Luo M."/>
            <person name="Chen J."/>
            <person name="Hu R."/>
        </authorList>
    </citation>
    <scope>NUCLEOTIDE SEQUENCE [MRNA] (ISOFORM 1)</scope>
    <source>
        <tissue>Pituitary</tissue>
    </source>
</reference>
<reference key="5">
    <citation type="submission" date="2003-07" db="EMBL/GenBank/DDBJ databases">
        <title>Cloning and characterization of a new human cDNA homologous to pig UMP-CMP kinase mRNA.</title>
        <authorList>
            <person name="Fan Y.X."/>
            <person name="Yu L."/>
            <person name="Dai F.Y."/>
            <person name="Zhou Y."/>
            <person name="Huang J."/>
            <person name="Zhao S.Y."/>
        </authorList>
    </citation>
    <scope>NUCLEOTIDE SEQUENCE [MRNA] (ISOFORM 1)</scope>
</reference>
<reference key="6">
    <citation type="journal article" date="2000" name="Proc. Natl. Acad. Sci. U.S.A.">
        <title>Gene expression profiling in the human hypothalamus-pituitary-adrenal axis and full-length cDNA cloning.</title>
        <authorList>
            <person name="Hu R.-M."/>
            <person name="Han Z.-G."/>
            <person name="Song H.-D."/>
            <person name="Peng Y.-D."/>
            <person name="Huang Q.-H."/>
            <person name="Ren S.-X."/>
            <person name="Gu Y.-J."/>
            <person name="Huang C.-H."/>
            <person name="Li Y.-B."/>
            <person name="Jiang C.-L."/>
            <person name="Fu G."/>
            <person name="Zhang Q.-H."/>
            <person name="Gu B.-W."/>
            <person name="Dai M."/>
            <person name="Mao Y.-F."/>
            <person name="Gao G.-F."/>
            <person name="Rong R."/>
            <person name="Ye M."/>
            <person name="Zhou J."/>
            <person name="Xu S.-H."/>
            <person name="Gu J."/>
            <person name="Shi J.-X."/>
            <person name="Jin W.-R."/>
            <person name="Zhang C.-K."/>
            <person name="Wu T.-M."/>
            <person name="Huang G.-Y."/>
            <person name="Chen Z."/>
            <person name="Chen M.-D."/>
            <person name="Chen J.-L."/>
        </authorList>
    </citation>
    <scope>NUCLEOTIDE SEQUENCE [LARGE SCALE MRNA] (ISOFORM 1)</scope>
    <source>
        <tissue>Hypothalamus</tissue>
    </source>
</reference>
<reference key="7">
    <citation type="journal article" date="2004" name="Nat. Genet.">
        <title>Complete sequencing and characterization of 21,243 full-length human cDNAs.</title>
        <authorList>
            <person name="Ota T."/>
            <person name="Suzuki Y."/>
            <person name="Nishikawa T."/>
            <person name="Otsuki T."/>
            <person name="Sugiyama T."/>
            <person name="Irie R."/>
            <person name="Wakamatsu A."/>
            <person name="Hayashi K."/>
            <person name="Sato H."/>
            <person name="Nagai K."/>
            <person name="Kimura K."/>
            <person name="Makita H."/>
            <person name="Sekine M."/>
            <person name="Obayashi M."/>
            <person name="Nishi T."/>
            <person name="Shibahara T."/>
            <person name="Tanaka T."/>
            <person name="Ishii S."/>
            <person name="Yamamoto J."/>
            <person name="Saito K."/>
            <person name="Kawai Y."/>
            <person name="Isono Y."/>
            <person name="Nakamura Y."/>
            <person name="Nagahari K."/>
            <person name="Murakami K."/>
            <person name="Yasuda T."/>
            <person name="Iwayanagi T."/>
            <person name="Wagatsuma M."/>
            <person name="Shiratori A."/>
            <person name="Sudo H."/>
            <person name="Hosoiri T."/>
            <person name="Kaku Y."/>
            <person name="Kodaira H."/>
            <person name="Kondo H."/>
            <person name="Sugawara M."/>
            <person name="Takahashi M."/>
            <person name="Kanda K."/>
            <person name="Yokoi T."/>
            <person name="Furuya T."/>
            <person name="Kikkawa E."/>
            <person name="Omura Y."/>
            <person name="Abe K."/>
            <person name="Kamihara K."/>
            <person name="Katsuta N."/>
            <person name="Sato K."/>
            <person name="Tanikawa M."/>
            <person name="Yamazaki M."/>
            <person name="Ninomiya K."/>
            <person name="Ishibashi T."/>
            <person name="Yamashita H."/>
            <person name="Murakawa K."/>
            <person name="Fujimori K."/>
            <person name="Tanai H."/>
            <person name="Kimata M."/>
            <person name="Watanabe M."/>
            <person name="Hiraoka S."/>
            <person name="Chiba Y."/>
            <person name="Ishida S."/>
            <person name="Ono Y."/>
            <person name="Takiguchi S."/>
            <person name="Watanabe S."/>
            <person name="Yosida M."/>
            <person name="Hotuta T."/>
            <person name="Kusano J."/>
            <person name="Kanehori K."/>
            <person name="Takahashi-Fujii A."/>
            <person name="Hara H."/>
            <person name="Tanase T.-O."/>
            <person name="Nomura Y."/>
            <person name="Togiya S."/>
            <person name="Komai F."/>
            <person name="Hara R."/>
            <person name="Takeuchi K."/>
            <person name="Arita M."/>
            <person name="Imose N."/>
            <person name="Musashino K."/>
            <person name="Yuuki H."/>
            <person name="Oshima A."/>
            <person name="Sasaki N."/>
            <person name="Aotsuka S."/>
            <person name="Yoshikawa Y."/>
            <person name="Matsunawa H."/>
            <person name="Ichihara T."/>
            <person name="Shiohata N."/>
            <person name="Sano S."/>
            <person name="Moriya S."/>
            <person name="Momiyama H."/>
            <person name="Satoh N."/>
            <person name="Takami S."/>
            <person name="Terashima Y."/>
            <person name="Suzuki O."/>
            <person name="Nakagawa S."/>
            <person name="Senoh A."/>
            <person name="Mizoguchi H."/>
            <person name="Goto Y."/>
            <person name="Shimizu F."/>
            <person name="Wakebe H."/>
            <person name="Hishigaki H."/>
            <person name="Watanabe T."/>
            <person name="Sugiyama A."/>
            <person name="Takemoto M."/>
            <person name="Kawakami B."/>
            <person name="Yamazaki M."/>
            <person name="Watanabe K."/>
            <person name="Kumagai A."/>
            <person name="Itakura S."/>
            <person name="Fukuzumi Y."/>
            <person name="Fujimori Y."/>
            <person name="Komiyama M."/>
            <person name="Tashiro H."/>
            <person name="Tanigami A."/>
            <person name="Fujiwara T."/>
            <person name="Ono T."/>
            <person name="Yamada K."/>
            <person name="Fujii Y."/>
            <person name="Ozaki K."/>
            <person name="Hirao M."/>
            <person name="Ohmori Y."/>
            <person name="Kawabata A."/>
            <person name="Hikiji T."/>
            <person name="Kobatake N."/>
            <person name="Inagaki H."/>
            <person name="Ikema Y."/>
            <person name="Okamoto S."/>
            <person name="Okitani R."/>
            <person name="Kawakami T."/>
            <person name="Noguchi S."/>
            <person name="Itoh T."/>
            <person name="Shigeta K."/>
            <person name="Senba T."/>
            <person name="Matsumura K."/>
            <person name="Nakajima Y."/>
            <person name="Mizuno T."/>
            <person name="Morinaga M."/>
            <person name="Sasaki M."/>
            <person name="Togashi T."/>
            <person name="Oyama M."/>
            <person name="Hata H."/>
            <person name="Watanabe M."/>
            <person name="Komatsu T."/>
            <person name="Mizushima-Sugano J."/>
            <person name="Satoh T."/>
            <person name="Shirai Y."/>
            <person name="Takahashi Y."/>
            <person name="Nakagawa K."/>
            <person name="Okumura K."/>
            <person name="Nagase T."/>
            <person name="Nomura N."/>
            <person name="Kikuchi H."/>
            <person name="Masuho Y."/>
            <person name="Yamashita R."/>
            <person name="Nakai K."/>
            <person name="Yada T."/>
            <person name="Nakamura Y."/>
            <person name="Ohara O."/>
            <person name="Isogai T."/>
            <person name="Sugano S."/>
        </authorList>
    </citation>
    <scope>NUCLEOTIDE SEQUENCE [LARGE SCALE MRNA] (ISOFORMS 2 AND 3)</scope>
</reference>
<reference key="8">
    <citation type="submission" date="2005-04" db="EMBL/GenBank/DDBJ databases">
        <authorList>
            <person name="Suzuki Y."/>
            <person name="Sugano S."/>
            <person name="Totoki Y."/>
            <person name="Toyoda A."/>
            <person name="Takeda T."/>
            <person name="Sakaki Y."/>
            <person name="Tanaka A."/>
            <person name="Yokoyama S."/>
        </authorList>
    </citation>
    <scope>NUCLEOTIDE SEQUENCE [LARGE SCALE MRNA] (ISOFORM 1)</scope>
    <source>
        <tissue>Small intestine</tissue>
    </source>
</reference>
<reference key="9">
    <citation type="journal article" date="2006" name="Nature">
        <title>The DNA sequence and biological annotation of human chromosome 1.</title>
        <authorList>
            <person name="Gregory S.G."/>
            <person name="Barlow K.F."/>
            <person name="McLay K.E."/>
            <person name="Kaul R."/>
            <person name="Swarbreck D."/>
            <person name="Dunham A."/>
            <person name="Scott C.E."/>
            <person name="Howe K.L."/>
            <person name="Woodfine K."/>
            <person name="Spencer C.C.A."/>
            <person name="Jones M.C."/>
            <person name="Gillson C."/>
            <person name="Searle S."/>
            <person name="Zhou Y."/>
            <person name="Kokocinski F."/>
            <person name="McDonald L."/>
            <person name="Evans R."/>
            <person name="Phillips K."/>
            <person name="Atkinson A."/>
            <person name="Cooper R."/>
            <person name="Jones C."/>
            <person name="Hall R.E."/>
            <person name="Andrews T.D."/>
            <person name="Lloyd C."/>
            <person name="Ainscough R."/>
            <person name="Almeida J.P."/>
            <person name="Ambrose K.D."/>
            <person name="Anderson F."/>
            <person name="Andrew R.W."/>
            <person name="Ashwell R.I.S."/>
            <person name="Aubin K."/>
            <person name="Babbage A.K."/>
            <person name="Bagguley C.L."/>
            <person name="Bailey J."/>
            <person name="Beasley H."/>
            <person name="Bethel G."/>
            <person name="Bird C.P."/>
            <person name="Bray-Allen S."/>
            <person name="Brown J.Y."/>
            <person name="Brown A.J."/>
            <person name="Buckley D."/>
            <person name="Burton J."/>
            <person name="Bye J."/>
            <person name="Carder C."/>
            <person name="Chapman J.C."/>
            <person name="Clark S.Y."/>
            <person name="Clarke G."/>
            <person name="Clee C."/>
            <person name="Cobley V."/>
            <person name="Collier R.E."/>
            <person name="Corby N."/>
            <person name="Coville G.J."/>
            <person name="Davies J."/>
            <person name="Deadman R."/>
            <person name="Dunn M."/>
            <person name="Earthrowl M."/>
            <person name="Ellington A.G."/>
            <person name="Errington H."/>
            <person name="Frankish A."/>
            <person name="Frankland J."/>
            <person name="French L."/>
            <person name="Garner P."/>
            <person name="Garnett J."/>
            <person name="Gay L."/>
            <person name="Ghori M.R.J."/>
            <person name="Gibson R."/>
            <person name="Gilby L.M."/>
            <person name="Gillett W."/>
            <person name="Glithero R.J."/>
            <person name="Grafham D.V."/>
            <person name="Griffiths C."/>
            <person name="Griffiths-Jones S."/>
            <person name="Grocock R."/>
            <person name="Hammond S."/>
            <person name="Harrison E.S.I."/>
            <person name="Hart E."/>
            <person name="Haugen E."/>
            <person name="Heath P.D."/>
            <person name="Holmes S."/>
            <person name="Holt K."/>
            <person name="Howden P.J."/>
            <person name="Hunt A.R."/>
            <person name="Hunt S.E."/>
            <person name="Hunter G."/>
            <person name="Isherwood J."/>
            <person name="James R."/>
            <person name="Johnson C."/>
            <person name="Johnson D."/>
            <person name="Joy A."/>
            <person name="Kay M."/>
            <person name="Kershaw J.K."/>
            <person name="Kibukawa M."/>
            <person name="Kimberley A.M."/>
            <person name="King A."/>
            <person name="Knights A.J."/>
            <person name="Lad H."/>
            <person name="Laird G."/>
            <person name="Lawlor S."/>
            <person name="Leongamornlert D.A."/>
            <person name="Lloyd D.M."/>
            <person name="Loveland J."/>
            <person name="Lovell J."/>
            <person name="Lush M.J."/>
            <person name="Lyne R."/>
            <person name="Martin S."/>
            <person name="Mashreghi-Mohammadi M."/>
            <person name="Matthews L."/>
            <person name="Matthews N.S.W."/>
            <person name="McLaren S."/>
            <person name="Milne S."/>
            <person name="Mistry S."/>
            <person name="Moore M.J.F."/>
            <person name="Nickerson T."/>
            <person name="O'Dell C.N."/>
            <person name="Oliver K."/>
            <person name="Palmeiri A."/>
            <person name="Palmer S.A."/>
            <person name="Parker A."/>
            <person name="Patel D."/>
            <person name="Pearce A.V."/>
            <person name="Peck A.I."/>
            <person name="Pelan S."/>
            <person name="Phelps K."/>
            <person name="Phillimore B.J."/>
            <person name="Plumb R."/>
            <person name="Rajan J."/>
            <person name="Raymond C."/>
            <person name="Rouse G."/>
            <person name="Saenphimmachak C."/>
            <person name="Sehra H.K."/>
            <person name="Sheridan E."/>
            <person name="Shownkeen R."/>
            <person name="Sims S."/>
            <person name="Skuce C.D."/>
            <person name="Smith M."/>
            <person name="Steward C."/>
            <person name="Subramanian S."/>
            <person name="Sycamore N."/>
            <person name="Tracey A."/>
            <person name="Tromans A."/>
            <person name="Van Helmond Z."/>
            <person name="Wall M."/>
            <person name="Wallis J.M."/>
            <person name="White S."/>
            <person name="Whitehead S.L."/>
            <person name="Wilkinson J.E."/>
            <person name="Willey D.L."/>
            <person name="Williams H."/>
            <person name="Wilming L."/>
            <person name="Wray P.W."/>
            <person name="Wu Z."/>
            <person name="Coulson A."/>
            <person name="Vaudin M."/>
            <person name="Sulston J.E."/>
            <person name="Durbin R.M."/>
            <person name="Hubbard T."/>
            <person name="Wooster R."/>
            <person name="Dunham I."/>
            <person name="Carter N.P."/>
            <person name="McVean G."/>
            <person name="Ross M.T."/>
            <person name="Harrow J."/>
            <person name="Olson M.V."/>
            <person name="Beck S."/>
            <person name="Rogers J."/>
            <person name="Bentley D.R."/>
        </authorList>
    </citation>
    <scope>NUCLEOTIDE SEQUENCE [LARGE SCALE GENOMIC DNA]</scope>
</reference>
<reference key="10">
    <citation type="submission" date="2005-09" db="EMBL/GenBank/DDBJ databases">
        <authorList>
            <person name="Mural R.J."/>
            <person name="Istrail S."/>
            <person name="Sutton G.G."/>
            <person name="Florea L."/>
            <person name="Halpern A.L."/>
            <person name="Mobarry C.M."/>
            <person name="Lippert R."/>
            <person name="Walenz B."/>
            <person name="Shatkay H."/>
            <person name="Dew I."/>
            <person name="Miller J.R."/>
            <person name="Flanigan M.J."/>
            <person name="Edwards N.J."/>
            <person name="Bolanos R."/>
            <person name="Fasulo D."/>
            <person name="Halldorsson B.V."/>
            <person name="Hannenhalli S."/>
            <person name="Turner R."/>
            <person name="Yooseph S."/>
            <person name="Lu F."/>
            <person name="Nusskern D.R."/>
            <person name="Shue B.C."/>
            <person name="Zheng X.H."/>
            <person name="Zhong F."/>
            <person name="Delcher A.L."/>
            <person name="Huson D.H."/>
            <person name="Kravitz S.A."/>
            <person name="Mouchard L."/>
            <person name="Reinert K."/>
            <person name="Remington K.A."/>
            <person name="Clark A.G."/>
            <person name="Waterman M.S."/>
            <person name="Eichler E.E."/>
            <person name="Adams M.D."/>
            <person name="Hunkapiller M.W."/>
            <person name="Myers E.W."/>
            <person name="Venter J.C."/>
        </authorList>
    </citation>
    <scope>NUCLEOTIDE SEQUENCE [LARGE SCALE GENOMIC DNA]</scope>
</reference>
<reference key="11">
    <citation type="journal article" date="2004" name="Genome Res.">
        <title>The status, quality, and expansion of the NIH full-length cDNA project: the Mammalian Gene Collection (MGC).</title>
        <authorList>
            <consortium name="The MGC Project Team"/>
        </authorList>
    </citation>
    <scope>NUCLEOTIDE SEQUENCE [LARGE SCALE MRNA] (ISOFORM 3)</scope>
    <source>
        <tissue>Muscle</tissue>
    </source>
</reference>
<reference key="12">
    <citation type="journal article" date="1993" name="Electrophoresis">
        <title>Human liver protein map: update 1993.</title>
        <authorList>
            <person name="Hughes G.J."/>
            <person name="Frutiger S."/>
            <person name="Paquet N."/>
            <person name="Pasquali C."/>
            <person name="Sanchez J.-C."/>
            <person name="Tissot J.-D."/>
            <person name="Bairoch A."/>
            <person name="Appel R.D."/>
            <person name="Hochstrasser D.F."/>
        </authorList>
    </citation>
    <scope>PROTEIN SEQUENCE OF 1-29</scope>
    <source>
        <tissue>Liver</tissue>
    </source>
</reference>
<reference key="13">
    <citation type="journal article" date="1992" name="Electrophoresis">
        <title>Human liver protein map: a reference database established by microsequencing and gel comparison.</title>
        <authorList>
            <person name="Hochstrasser D.F."/>
            <person name="Frutiger S."/>
            <person name="Paquet N."/>
            <person name="Bairoch A."/>
            <person name="Ravier F."/>
            <person name="Pasquali C."/>
            <person name="Sanchez J.-C."/>
            <person name="Tissot J.-D."/>
            <person name="Bjellqvist B."/>
            <person name="Vargas R."/>
            <person name="Appel R.D."/>
            <person name="Hughes G.J."/>
        </authorList>
    </citation>
    <scope>PROTEIN SEQUENCE OF 1-10</scope>
    <source>
        <tissue>Liver</tissue>
    </source>
</reference>
<reference key="14">
    <citation type="submission" date="2010-01" db="UniProtKB">
        <authorList>
            <person name="Bienvenut W.V."/>
            <person name="Bilsland A.E."/>
            <person name="Keith W.N."/>
        </authorList>
    </citation>
    <scope>PROTEIN SEQUENCE OF 1-16; 62-73; 89-106; 152-171 AND 180-196</scope>
    <scope>IDENTIFICATION BY MASS SPECTROMETRY</scope>
    <source>
        <tissue>Colon carcinoma</tissue>
    </source>
</reference>
<reference key="15">
    <citation type="journal article" date="2009" name="Science">
        <title>Lysine acetylation targets protein complexes and co-regulates major cellular functions.</title>
        <authorList>
            <person name="Choudhary C."/>
            <person name="Kumar C."/>
            <person name="Gnad F."/>
            <person name="Nielsen M.L."/>
            <person name="Rehman M."/>
            <person name="Walther T.C."/>
            <person name="Olsen J.V."/>
            <person name="Mann M."/>
        </authorList>
    </citation>
    <scope>ACETYLATION [LARGE SCALE ANALYSIS] AT LYS-55</scope>
    <scope>IDENTIFICATION BY MASS SPECTROMETRY [LARGE SCALE ANALYSIS]</scope>
</reference>
<reference key="16">
    <citation type="journal article" date="2011" name="BMC Syst. Biol.">
        <title>Initial characterization of the human central proteome.</title>
        <authorList>
            <person name="Burkard T.R."/>
            <person name="Planyavsky M."/>
            <person name="Kaupe I."/>
            <person name="Breitwieser F.P."/>
            <person name="Buerckstuemmer T."/>
            <person name="Bennett K.L."/>
            <person name="Superti-Furga G."/>
            <person name="Colinge J."/>
        </authorList>
    </citation>
    <scope>IDENTIFICATION BY MASS SPECTROMETRY [LARGE SCALE ANALYSIS]</scope>
</reference>
<reference key="17">
    <citation type="journal article" date="2013" name="Int. J. Biochem. Cell Biol.">
        <title>The human adenylate kinase 9 is a nucleoside mono- and diphosphate kinase.</title>
        <authorList>
            <person name="Amiri M."/>
            <person name="Conserva F."/>
            <person name="Panayiotou C."/>
            <person name="Karlsson A."/>
            <person name="Solaroli N."/>
        </authorList>
    </citation>
    <scope>FUNCTION</scope>
    <scope>CATALYTIC ACTIVITY</scope>
</reference>
<reference key="18">
    <citation type="journal article" date="2014" name="J. Proteomics">
        <title>An enzyme assisted RP-RPLC approach for in-depth analysis of human liver phosphoproteome.</title>
        <authorList>
            <person name="Bian Y."/>
            <person name="Song C."/>
            <person name="Cheng K."/>
            <person name="Dong M."/>
            <person name="Wang F."/>
            <person name="Huang J."/>
            <person name="Sun D."/>
            <person name="Wang L."/>
            <person name="Ye M."/>
            <person name="Zou H."/>
        </authorList>
    </citation>
    <scope>PHOSPHORYLATION [LARGE SCALE ANALYSIS] AT SER-33</scope>
    <scope>IDENTIFICATION BY MASS SPECTROMETRY [LARGE SCALE ANALYSIS]</scope>
    <source>
        <tissue>Liver</tissue>
    </source>
</reference>
<reference key="19">
    <citation type="journal article" date="2017" name="Nat. Struct. Mol. Biol.">
        <title>Site-specific mapping of the human SUMO proteome reveals co-modification with phosphorylation.</title>
        <authorList>
            <person name="Hendriks I.A."/>
            <person name="Lyon D."/>
            <person name="Young C."/>
            <person name="Jensen L.J."/>
            <person name="Vertegaal A.C."/>
            <person name="Nielsen M.L."/>
        </authorList>
    </citation>
    <scope>SUMOYLATION [LARGE SCALE ANALYSIS] AT LYS-73</scope>
    <scope>IDENTIFICATION BY MASS SPECTROMETRY [LARGE SCALE ANALYSIS]</scope>
</reference>
<reference key="20">
    <citation type="journal article" date="2004" name="J. Biol. Chem.">
        <title>Substrate-induced conformational changes in human UMP/CMP kinase.</title>
        <authorList>
            <person name="Segura-Pena D."/>
            <person name="Sekulic N."/>
            <person name="Ort S."/>
            <person name="Konrad M."/>
            <person name="Lavie A."/>
        </authorList>
    </citation>
    <scope>X-RAY CRYSTALLOGRAPHY (2.1 ANGSTROMS)</scope>
</reference>
<protein>
    <recommendedName>
        <fullName evidence="3">UMP-CMP kinase</fullName>
        <ecNumber evidence="3">2.7.4.14</ecNumber>
    </recommendedName>
    <alternativeName>
        <fullName evidence="3">Deoxycytidylate kinase</fullName>
        <shortName evidence="3">CK</shortName>
        <shortName evidence="3">dCMP kinase</shortName>
    </alternativeName>
    <alternativeName>
        <fullName evidence="3">Nucleoside-diphosphate kinase</fullName>
        <ecNumber evidence="3">2.7.4.6</ecNumber>
    </alternativeName>
    <alternativeName>
        <fullName evidence="3">Uridine monophosphate/cytidine monophosphate kinase</fullName>
        <shortName evidence="3">UMP/CMP kinase</shortName>
        <shortName evidence="3">UMP/CMPK</shortName>
    </alternativeName>
</protein>
<organism>
    <name type="scientific">Homo sapiens</name>
    <name type="common">Human</name>
    <dbReference type="NCBI Taxonomy" id="9606"/>
    <lineage>
        <taxon>Eukaryota</taxon>
        <taxon>Metazoa</taxon>
        <taxon>Chordata</taxon>
        <taxon>Craniata</taxon>
        <taxon>Vertebrata</taxon>
        <taxon>Euteleostomi</taxon>
        <taxon>Mammalia</taxon>
        <taxon>Eutheria</taxon>
        <taxon>Euarchontoglires</taxon>
        <taxon>Primates</taxon>
        <taxon>Haplorrhini</taxon>
        <taxon>Catarrhini</taxon>
        <taxon>Hominidae</taxon>
        <taxon>Homo</taxon>
    </lineage>
</organism>